<name>SYY_LACLS</name>
<feature type="chain" id="PRO_1000088599" description="Tyrosine--tRNA ligase">
    <location>
        <begin position="1"/>
        <end position="419"/>
    </location>
</feature>
<feature type="domain" description="S4 RNA-binding" evidence="1">
    <location>
        <begin position="353"/>
        <end position="419"/>
    </location>
</feature>
<feature type="short sequence motif" description="'HIGH' region">
    <location>
        <begin position="39"/>
        <end position="48"/>
    </location>
</feature>
<feature type="short sequence motif" description="'KMSKS' region">
    <location>
        <begin position="229"/>
        <end position="233"/>
    </location>
</feature>
<feature type="binding site" evidence="1">
    <location>
        <position position="34"/>
    </location>
    <ligand>
        <name>L-tyrosine</name>
        <dbReference type="ChEBI" id="CHEBI:58315"/>
    </ligand>
</feature>
<feature type="binding site" evidence="1">
    <location>
        <position position="169"/>
    </location>
    <ligand>
        <name>L-tyrosine</name>
        <dbReference type="ChEBI" id="CHEBI:58315"/>
    </ligand>
</feature>
<feature type="binding site" evidence="1">
    <location>
        <position position="173"/>
    </location>
    <ligand>
        <name>L-tyrosine</name>
        <dbReference type="ChEBI" id="CHEBI:58315"/>
    </ligand>
</feature>
<feature type="binding site" evidence="1">
    <location>
        <position position="232"/>
    </location>
    <ligand>
        <name>ATP</name>
        <dbReference type="ChEBI" id="CHEBI:30616"/>
    </ligand>
</feature>
<protein>
    <recommendedName>
        <fullName evidence="1">Tyrosine--tRNA ligase</fullName>
        <ecNumber evidence="1">6.1.1.1</ecNumber>
    </recommendedName>
    <alternativeName>
        <fullName evidence="1">Tyrosyl-tRNA synthetase</fullName>
        <shortName evidence="1">TyrRS</shortName>
    </alternativeName>
</protein>
<accession>Q031T7</accession>
<proteinExistence type="inferred from homology"/>
<organism>
    <name type="scientific">Lactococcus lactis subsp. cremoris (strain SK11)</name>
    <dbReference type="NCBI Taxonomy" id="272622"/>
    <lineage>
        <taxon>Bacteria</taxon>
        <taxon>Bacillati</taxon>
        <taxon>Bacillota</taxon>
        <taxon>Bacilli</taxon>
        <taxon>Lactobacillales</taxon>
        <taxon>Streptococcaceae</taxon>
        <taxon>Lactococcus</taxon>
        <taxon>Lactococcus cremoris subsp. cremoris</taxon>
    </lineage>
</organism>
<reference key="1">
    <citation type="journal article" date="2006" name="Proc. Natl. Acad. Sci. U.S.A.">
        <title>Comparative genomics of the lactic acid bacteria.</title>
        <authorList>
            <person name="Makarova K.S."/>
            <person name="Slesarev A."/>
            <person name="Wolf Y.I."/>
            <person name="Sorokin A."/>
            <person name="Mirkin B."/>
            <person name="Koonin E.V."/>
            <person name="Pavlov A."/>
            <person name="Pavlova N."/>
            <person name="Karamychev V."/>
            <person name="Polouchine N."/>
            <person name="Shakhova V."/>
            <person name="Grigoriev I."/>
            <person name="Lou Y."/>
            <person name="Rohksar D."/>
            <person name="Lucas S."/>
            <person name="Huang K."/>
            <person name="Goodstein D.M."/>
            <person name="Hawkins T."/>
            <person name="Plengvidhya V."/>
            <person name="Welker D."/>
            <person name="Hughes J."/>
            <person name="Goh Y."/>
            <person name="Benson A."/>
            <person name="Baldwin K."/>
            <person name="Lee J.-H."/>
            <person name="Diaz-Muniz I."/>
            <person name="Dosti B."/>
            <person name="Smeianov V."/>
            <person name="Wechter W."/>
            <person name="Barabote R."/>
            <person name="Lorca G."/>
            <person name="Altermann E."/>
            <person name="Barrangou R."/>
            <person name="Ganesan B."/>
            <person name="Xie Y."/>
            <person name="Rawsthorne H."/>
            <person name="Tamir D."/>
            <person name="Parker C."/>
            <person name="Breidt F."/>
            <person name="Broadbent J.R."/>
            <person name="Hutkins R."/>
            <person name="O'Sullivan D."/>
            <person name="Steele J."/>
            <person name="Unlu G."/>
            <person name="Saier M.H. Jr."/>
            <person name="Klaenhammer T."/>
            <person name="Richardson P."/>
            <person name="Kozyavkin S."/>
            <person name="Weimer B.C."/>
            <person name="Mills D.A."/>
        </authorList>
    </citation>
    <scope>NUCLEOTIDE SEQUENCE [LARGE SCALE GENOMIC DNA]</scope>
    <source>
        <strain>SK11</strain>
    </source>
</reference>
<comment type="function">
    <text evidence="1">Catalyzes the attachment of tyrosine to tRNA(Tyr) in a two-step reaction: tyrosine is first activated by ATP to form Tyr-AMP and then transferred to the acceptor end of tRNA(Tyr).</text>
</comment>
<comment type="catalytic activity">
    <reaction evidence="1">
        <text>tRNA(Tyr) + L-tyrosine + ATP = L-tyrosyl-tRNA(Tyr) + AMP + diphosphate + H(+)</text>
        <dbReference type="Rhea" id="RHEA:10220"/>
        <dbReference type="Rhea" id="RHEA-COMP:9706"/>
        <dbReference type="Rhea" id="RHEA-COMP:9707"/>
        <dbReference type="ChEBI" id="CHEBI:15378"/>
        <dbReference type="ChEBI" id="CHEBI:30616"/>
        <dbReference type="ChEBI" id="CHEBI:33019"/>
        <dbReference type="ChEBI" id="CHEBI:58315"/>
        <dbReference type="ChEBI" id="CHEBI:78442"/>
        <dbReference type="ChEBI" id="CHEBI:78536"/>
        <dbReference type="ChEBI" id="CHEBI:456215"/>
        <dbReference type="EC" id="6.1.1.1"/>
    </reaction>
</comment>
<comment type="subunit">
    <text evidence="1">Homodimer.</text>
</comment>
<comment type="subcellular location">
    <subcellularLocation>
        <location evidence="1">Cytoplasm</location>
    </subcellularLocation>
</comment>
<comment type="similarity">
    <text evidence="1">Belongs to the class-I aminoacyl-tRNA synthetase family. TyrS type 1 subfamily.</text>
</comment>
<gene>
    <name evidence="1" type="primary">tyrS</name>
    <name type="ordered locus">LACR_0431</name>
</gene>
<dbReference type="EC" id="6.1.1.1" evidence="1"/>
<dbReference type="EMBL" id="CP000425">
    <property type="protein sequence ID" value="ABJ72035.1"/>
    <property type="molecule type" value="Genomic_DNA"/>
</dbReference>
<dbReference type="RefSeq" id="WP_011675456.1">
    <property type="nucleotide sequence ID" value="NC_008527.1"/>
</dbReference>
<dbReference type="SMR" id="Q031T7"/>
<dbReference type="GeneID" id="61108704"/>
<dbReference type="KEGG" id="llc:LACR_0431"/>
<dbReference type="HOGENOM" id="CLU_024003_0_3_9"/>
<dbReference type="Proteomes" id="UP000000240">
    <property type="component" value="Chromosome"/>
</dbReference>
<dbReference type="GO" id="GO:0005829">
    <property type="term" value="C:cytosol"/>
    <property type="evidence" value="ECO:0007669"/>
    <property type="project" value="TreeGrafter"/>
</dbReference>
<dbReference type="GO" id="GO:0005524">
    <property type="term" value="F:ATP binding"/>
    <property type="evidence" value="ECO:0007669"/>
    <property type="project" value="UniProtKB-UniRule"/>
</dbReference>
<dbReference type="GO" id="GO:0003723">
    <property type="term" value="F:RNA binding"/>
    <property type="evidence" value="ECO:0007669"/>
    <property type="project" value="UniProtKB-KW"/>
</dbReference>
<dbReference type="GO" id="GO:0004831">
    <property type="term" value="F:tyrosine-tRNA ligase activity"/>
    <property type="evidence" value="ECO:0007669"/>
    <property type="project" value="UniProtKB-UniRule"/>
</dbReference>
<dbReference type="GO" id="GO:0006437">
    <property type="term" value="P:tyrosyl-tRNA aminoacylation"/>
    <property type="evidence" value="ECO:0007669"/>
    <property type="project" value="UniProtKB-UniRule"/>
</dbReference>
<dbReference type="CDD" id="cd00165">
    <property type="entry name" value="S4"/>
    <property type="match status" value="1"/>
</dbReference>
<dbReference type="CDD" id="cd00805">
    <property type="entry name" value="TyrRS_core"/>
    <property type="match status" value="1"/>
</dbReference>
<dbReference type="FunFam" id="1.10.240.10:FF:000001">
    <property type="entry name" value="Tyrosine--tRNA ligase"/>
    <property type="match status" value="1"/>
</dbReference>
<dbReference type="FunFam" id="3.40.50.620:FF:000008">
    <property type="entry name" value="Tyrosine--tRNA ligase"/>
    <property type="match status" value="1"/>
</dbReference>
<dbReference type="Gene3D" id="3.40.50.620">
    <property type="entry name" value="HUPs"/>
    <property type="match status" value="1"/>
</dbReference>
<dbReference type="Gene3D" id="3.10.290.10">
    <property type="entry name" value="RNA-binding S4 domain"/>
    <property type="match status" value="1"/>
</dbReference>
<dbReference type="Gene3D" id="1.10.240.10">
    <property type="entry name" value="Tyrosyl-Transfer RNA Synthetase"/>
    <property type="match status" value="1"/>
</dbReference>
<dbReference type="HAMAP" id="MF_02006">
    <property type="entry name" value="Tyr_tRNA_synth_type1"/>
    <property type="match status" value="1"/>
</dbReference>
<dbReference type="InterPro" id="IPR001412">
    <property type="entry name" value="aa-tRNA-synth_I_CS"/>
</dbReference>
<dbReference type="InterPro" id="IPR002305">
    <property type="entry name" value="aa-tRNA-synth_Ic"/>
</dbReference>
<dbReference type="InterPro" id="IPR014729">
    <property type="entry name" value="Rossmann-like_a/b/a_fold"/>
</dbReference>
<dbReference type="InterPro" id="IPR002942">
    <property type="entry name" value="S4_RNA-bd"/>
</dbReference>
<dbReference type="InterPro" id="IPR036986">
    <property type="entry name" value="S4_RNA-bd_sf"/>
</dbReference>
<dbReference type="InterPro" id="IPR054608">
    <property type="entry name" value="SYY-like_C"/>
</dbReference>
<dbReference type="InterPro" id="IPR002307">
    <property type="entry name" value="Tyr-tRNA-ligase"/>
</dbReference>
<dbReference type="InterPro" id="IPR024088">
    <property type="entry name" value="Tyr-tRNA-ligase_bac-type"/>
</dbReference>
<dbReference type="InterPro" id="IPR024107">
    <property type="entry name" value="Tyr-tRNA-ligase_bac_1"/>
</dbReference>
<dbReference type="NCBIfam" id="TIGR00234">
    <property type="entry name" value="tyrS"/>
    <property type="match status" value="1"/>
</dbReference>
<dbReference type="PANTHER" id="PTHR11766:SF0">
    <property type="entry name" value="TYROSINE--TRNA LIGASE, MITOCHONDRIAL"/>
    <property type="match status" value="1"/>
</dbReference>
<dbReference type="PANTHER" id="PTHR11766">
    <property type="entry name" value="TYROSYL-TRNA SYNTHETASE"/>
    <property type="match status" value="1"/>
</dbReference>
<dbReference type="Pfam" id="PF22421">
    <property type="entry name" value="SYY_C-terminal"/>
    <property type="match status" value="1"/>
</dbReference>
<dbReference type="Pfam" id="PF00579">
    <property type="entry name" value="tRNA-synt_1b"/>
    <property type="match status" value="1"/>
</dbReference>
<dbReference type="PRINTS" id="PR01040">
    <property type="entry name" value="TRNASYNTHTYR"/>
</dbReference>
<dbReference type="SMART" id="SM00363">
    <property type="entry name" value="S4"/>
    <property type="match status" value="1"/>
</dbReference>
<dbReference type="SUPFAM" id="SSF55174">
    <property type="entry name" value="Alpha-L RNA-binding motif"/>
    <property type="match status" value="1"/>
</dbReference>
<dbReference type="SUPFAM" id="SSF52374">
    <property type="entry name" value="Nucleotidylyl transferase"/>
    <property type="match status" value="1"/>
</dbReference>
<dbReference type="PROSITE" id="PS00178">
    <property type="entry name" value="AA_TRNA_LIGASE_I"/>
    <property type="match status" value="1"/>
</dbReference>
<dbReference type="PROSITE" id="PS50889">
    <property type="entry name" value="S4"/>
    <property type="match status" value="1"/>
</dbReference>
<evidence type="ECO:0000255" key="1">
    <source>
        <dbReference type="HAMAP-Rule" id="MF_02006"/>
    </source>
</evidence>
<sequence length="419" mass="47347">MNIFDELKARGLVFQTTDEAALSKALTEDMVSYYVGYDPTADSLHLGNLVLILTMKRLQMAGHKPYALVGGATGLIGDPSFKDSERSLQTKDTVTKWSGKIRSQLERFLDFENGENKAEMTNNYNWFENLTFIDFLRDVGKHFTVNYMISKDSVKSRMESGISYTEFAYQIMQGYDFYELNQLHNVTLQLGGSDQWGNMTAGTELLRRKANKQGHVITIPLITDSTGKKFGKSEGNAIWLDADKTSPYEMYQFWLNVDDADAVKMLKIFTFLSLEEIAEIEEQFEAARHERLAQKVLAREVVSLVHGKEAYEQAVKTSEILFGGGDLRQLDAKSILTGLKAAPQHQIAPDEDLTLIELLISAGIAPSKRQAREDITNGAIYINGERVQELDYVLTDSDKIENRLTVIRRGKKKNFVLTY</sequence>
<keyword id="KW-0030">Aminoacyl-tRNA synthetase</keyword>
<keyword id="KW-0067">ATP-binding</keyword>
<keyword id="KW-0963">Cytoplasm</keyword>
<keyword id="KW-0436">Ligase</keyword>
<keyword id="KW-0547">Nucleotide-binding</keyword>
<keyword id="KW-0648">Protein biosynthesis</keyword>
<keyword id="KW-0694">RNA-binding</keyword>